<organism>
    <name type="scientific">Pseudomonas aeruginosa (strain UCBPP-PA14)</name>
    <dbReference type="NCBI Taxonomy" id="208963"/>
    <lineage>
        <taxon>Bacteria</taxon>
        <taxon>Pseudomonadati</taxon>
        <taxon>Pseudomonadota</taxon>
        <taxon>Gammaproteobacteria</taxon>
        <taxon>Pseudomonadales</taxon>
        <taxon>Pseudomonadaceae</taxon>
        <taxon>Pseudomonas</taxon>
    </lineage>
</organism>
<sequence length="142" mass="16029">MKTYTAKPETVQRDWFVVDAAGQTLGRLATEIARRLRGKHKPEYTPHVDTGDYIVVINAEQVRVTGAKTTDKMYYHHSGFPGGIKSINFEKLIAKAPERVIETAVKGMLPKNPLGRDMYRKLKVYKGASHPHTAQQPQELKI</sequence>
<reference key="1">
    <citation type="journal article" date="2006" name="Genome Biol.">
        <title>Genomic analysis reveals that Pseudomonas aeruginosa virulence is combinatorial.</title>
        <authorList>
            <person name="Lee D.G."/>
            <person name="Urbach J.M."/>
            <person name="Wu G."/>
            <person name="Liberati N.T."/>
            <person name="Feinbaum R.L."/>
            <person name="Miyata S."/>
            <person name="Diggins L.T."/>
            <person name="He J."/>
            <person name="Saucier M."/>
            <person name="Deziel E."/>
            <person name="Friedman L."/>
            <person name="Li L."/>
            <person name="Grills G."/>
            <person name="Montgomery K."/>
            <person name="Kucherlapati R."/>
            <person name="Rahme L.G."/>
            <person name="Ausubel F.M."/>
        </authorList>
    </citation>
    <scope>NUCLEOTIDE SEQUENCE [LARGE SCALE GENOMIC DNA]</scope>
    <source>
        <strain>UCBPP-PA14</strain>
    </source>
</reference>
<evidence type="ECO:0000255" key="1">
    <source>
        <dbReference type="HAMAP-Rule" id="MF_01366"/>
    </source>
</evidence>
<evidence type="ECO:0000305" key="2"/>
<protein>
    <recommendedName>
        <fullName evidence="1">Large ribosomal subunit protein uL13</fullName>
    </recommendedName>
    <alternativeName>
        <fullName evidence="2">50S ribosomal protein L13</fullName>
    </alternativeName>
</protein>
<name>RL13_PSEAB</name>
<proteinExistence type="inferred from homology"/>
<keyword id="KW-0687">Ribonucleoprotein</keyword>
<keyword id="KW-0689">Ribosomal protein</keyword>
<feature type="chain" id="PRO_1000055444" description="Large ribosomal subunit protein uL13">
    <location>
        <begin position="1"/>
        <end position="142"/>
    </location>
</feature>
<accession>Q02H07</accession>
<comment type="function">
    <text evidence="1">This protein is one of the early assembly proteins of the 50S ribosomal subunit, although it is not seen to bind rRNA by itself. It is important during the early stages of 50S assembly.</text>
</comment>
<comment type="subunit">
    <text evidence="1">Part of the 50S ribosomal subunit.</text>
</comment>
<comment type="similarity">
    <text evidence="1">Belongs to the universal ribosomal protein uL13 family.</text>
</comment>
<dbReference type="EMBL" id="CP000438">
    <property type="protein sequence ID" value="ABJ13702.1"/>
    <property type="molecule type" value="Genomic_DNA"/>
</dbReference>
<dbReference type="RefSeq" id="WP_003094164.1">
    <property type="nucleotide sequence ID" value="NZ_CP034244.1"/>
</dbReference>
<dbReference type="SMR" id="Q02H07"/>
<dbReference type="KEGG" id="pau:PA14_57590"/>
<dbReference type="PseudoCAP" id="PA14_57590"/>
<dbReference type="HOGENOM" id="CLU_082184_2_2_6"/>
<dbReference type="BioCyc" id="PAER208963:G1G74-4851-MONOMER"/>
<dbReference type="Proteomes" id="UP000000653">
    <property type="component" value="Chromosome"/>
</dbReference>
<dbReference type="GO" id="GO:0022625">
    <property type="term" value="C:cytosolic large ribosomal subunit"/>
    <property type="evidence" value="ECO:0007669"/>
    <property type="project" value="TreeGrafter"/>
</dbReference>
<dbReference type="GO" id="GO:0003729">
    <property type="term" value="F:mRNA binding"/>
    <property type="evidence" value="ECO:0007669"/>
    <property type="project" value="TreeGrafter"/>
</dbReference>
<dbReference type="GO" id="GO:0003735">
    <property type="term" value="F:structural constituent of ribosome"/>
    <property type="evidence" value="ECO:0007669"/>
    <property type="project" value="InterPro"/>
</dbReference>
<dbReference type="GO" id="GO:0017148">
    <property type="term" value="P:negative regulation of translation"/>
    <property type="evidence" value="ECO:0007669"/>
    <property type="project" value="TreeGrafter"/>
</dbReference>
<dbReference type="GO" id="GO:0006412">
    <property type="term" value="P:translation"/>
    <property type="evidence" value="ECO:0007669"/>
    <property type="project" value="UniProtKB-UniRule"/>
</dbReference>
<dbReference type="CDD" id="cd00392">
    <property type="entry name" value="Ribosomal_L13"/>
    <property type="match status" value="1"/>
</dbReference>
<dbReference type="FunFam" id="3.90.1180.10:FF:000001">
    <property type="entry name" value="50S ribosomal protein L13"/>
    <property type="match status" value="1"/>
</dbReference>
<dbReference type="Gene3D" id="3.90.1180.10">
    <property type="entry name" value="Ribosomal protein L13"/>
    <property type="match status" value="1"/>
</dbReference>
<dbReference type="HAMAP" id="MF_01366">
    <property type="entry name" value="Ribosomal_uL13"/>
    <property type="match status" value="1"/>
</dbReference>
<dbReference type="InterPro" id="IPR005822">
    <property type="entry name" value="Ribosomal_uL13"/>
</dbReference>
<dbReference type="InterPro" id="IPR005823">
    <property type="entry name" value="Ribosomal_uL13_bac-type"/>
</dbReference>
<dbReference type="InterPro" id="IPR023563">
    <property type="entry name" value="Ribosomal_uL13_CS"/>
</dbReference>
<dbReference type="InterPro" id="IPR036899">
    <property type="entry name" value="Ribosomal_uL13_sf"/>
</dbReference>
<dbReference type="NCBIfam" id="TIGR01066">
    <property type="entry name" value="rplM_bact"/>
    <property type="match status" value="1"/>
</dbReference>
<dbReference type="PANTHER" id="PTHR11545:SF2">
    <property type="entry name" value="LARGE RIBOSOMAL SUBUNIT PROTEIN UL13M"/>
    <property type="match status" value="1"/>
</dbReference>
<dbReference type="PANTHER" id="PTHR11545">
    <property type="entry name" value="RIBOSOMAL PROTEIN L13"/>
    <property type="match status" value="1"/>
</dbReference>
<dbReference type="Pfam" id="PF00572">
    <property type="entry name" value="Ribosomal_L13"/>
    <property type="match status" value="1"/>
</dbReference>
<dbReference type="PIRSF" id="PIRSF002181">
    <property type="entry name" value="Ribosomal_L13"/>
    <property type="match status" value="1"/>
</dbReference>
<dbReference type="SUPFAM" id="SSF52161">
    <property type="entry name" value="Ribosomal protein L13"/>
    <property type="match status" value="1"/>
</dbReference>
<dbReference type="PROSITE" id="PS00783">
    <property type="entry name" value="RIBOSOMAL_L13"/>
    <property type="match status" value="1"/>
</dbReference>
<gene>
    <name evidence="1" type="primary">rplM</name>
    <name type="ordered locus">PA14_57590</name>
</gene>